<proteinExistence type="inferred from homology"/>
<gene>
    <name evidence="1" type="primary">hutI</name>
    <name type="ordered locus">Ssed_4449</name>
</gene>
<dbReference type="EC" id="3.5.2.7" evidence="1"/>
<dbReference type="EMBL" id="CP000821">
    <property type="protein sequence ID" value="ABV39051.1"/>
    <property type="molecule type" value="Genomic_DNA"/>
</dbReference>
<dbReference type="RefSeq" id="WP_012144778.1">
    <property type="nucleotide sequence ID" value="NC_009831.1"/>
</dbReference>
<dbReference type="SMR" id="A8G1S8"/>
<dbReference type="STRING" id="425104.Ssed_4449"/>
<dbReference type="KEGG" id="sse:Ssed_4449"/>
<dbReference type="eggNOG" id="COG1228">
    <property type="taxonomic scope" value="Bacteria"/>
</dbReference>
<dbReference type="HOGENOM" id="CLU_041647_0_0_6"/>
<dbReference type="OrthoDB" id="9776455at2"/>
<dbReference type="UniPathway" id="UPA00379">
    <property type="reaction ID" value="UER00551"/>
</dbReference>
<dbReference type="Proteomes" id="UP000002015">
    <property type="component" value="Chromosome"/>
</dbReference>
<dbReference type="GO" id="GO:0005737">
    <property type="term" value="C:cytoplasm"/>
    <property type="evidence" value="ECO:0007669"/>
    <property type="project" value="UniProtKB-SubCell"/>
</dbReference>
<dbReference type="GO" id="GO:0050480">
    <property type="term" value="F:imidazolonepropionase activity"/>
    <property type="evidence" value="ECO:0007669"/>
    <property type="project" value="UniProtKB-UniRule"/>
</dbReference>
<dbReference type="GO" id="GO:0005506">
    <property type="term" value="F:iron ion binding"/>
    <property type="evidence" value="ECO:0007669"/>
    <property type="project" value="UniProtKB-UniRule"/>
</dbReference>
<dbReference type="GO" id="GO:0008270">
    <property type="term" value="F:zinc ion binding"/>
    <property type="evidence" value="ECO:0007669"/>
    <property type="project" value="UniProtKB-UniRule"/>
</dbReference>
<dbReference type="GO" id="GO:0019556">
    <property type="term" value="P:L-histidine catabolic process to glutamate and formamide"/>
    <property type="evidence" value="ECO:0007669"/>
    <property type="project" value="UniProtKB-UniPathway"/>
</dbReference>
<dbReference type="GO" id="GO:0019557">
    <property type="term" value="P:L-histidine catabolic process to glutamate and formate"/>
    <property type="evidence" value="ECO:0007669"/>
    <property type="project" value="UniProtKB-UniPathway"/>
</dbReference>
<dbReference type="CDD" id="cd01296">
    <property type="entry name" value="Imidazolone-5PH"/>
    <property type="match status" value="1"/>
</dbReference>
<dbReference type="FunFam" id="3.20.20.140:FF:000007">
    <property type="entry name" value="Imidazolonepropionase"/>
    <property type="match status" value="1"/>
</dbReference>
<dbReference type="Gene3D" id="3.20.20.140">
    <property type="entry name" value="Metal-dependent hydrolases"/>
    <property type="match status" value="1"/>
</dbReference>
<dbReference type="Gene3D" id="2.30.40.10">
    <property type="entry name" value="Urease, subunit C, domain 1"/>
    <property type="match status" value="1"/>
</dbReference>
<dbReference type="HAMAP" id="MF_00372">
    <property type="entry name" value="HutI"/>
    <property type="match status" value="1"/>
</dbReference>
<dbReference type="InterPro" id="IPR006680">
    <property type="entry name" value="Amidohydro-rel"/>
</dbReference>
<dbReference type="InterPro" id="IPR005920">
    <property type="entry name" value="HutI"/>
</dbReference>
<dbReference type="InterPro" id="IPR011059">
    <property type="entry name" value="Metal-dep_hydrolase_composite"/>
</dbReference>
<dbReference type="InterPro" id="IPR032466">
    <property type="entry name" value="Metal_Hydrolase"/>
</dbReference>
<dbReference type="NCBIfam" id="TIGR01224">
    <property type="entry name" value="hutI"/>
    <property type="match status" value="1"/>
</dbReference>
<dbReference type="PANTHER" id="PTHR42752">
    <property type="entry name" value="IMIDAZOLONEPROPIONASE"/>
    <property type="match status" value="1"/>
</dbReference>
<dbReference type="PANTHER" id="PTHR42752:SF1">
    <property type="entry name" value="IMIDAZOLONEPROPIONASE-RELATED"/>
    <property type="match status" value="1"/>
</dbReference>
<dbReference type="Pfam" id="PF01979">
    <property type="entry name" value="Amidohydro_1"/>
    <property type="match status" value="1"/>
</dbReference>
<dbReference type="SUPFAM" id="SSF51338">
    <property type="entry name" value="Composite domain of metallo-dependent hydrolases"/>
    <property type="match status" value="1"/>
</dbReference>
<dbReference type="SUPFAM" id="SSF51556">
    <property type="entry name" value="Metallo-dependent hydrolases"/>
    <property type="match status" value="1"/>
</dbReference>
<accession>A8G1S8</accession>
<organism>
    <name type="scientific">Shewanella sediminis (strain HAW-EB3)</name>
    <dbReference type="NCBI Taxonomy" id="425104"/>
    <lineage>
        <taxon>Bacteria</taxon>
        <taxon>Pseudomonadati</taxon>
        <taxon>Pseudomonadota</taxon>
        <taxon>Gammaproteobacteria</taxon>
        <taxon>Alteromonadales</taxon>
        <taxon>Shewanellaceae</taxon>
        <taxon>Shewanella</taxon>
    </lineage>
</organism>
<keyword id="KW-0963">Cytoplasm</keyword>
<keyword id="KW-0369">Histidine metabolism</keyword>
<keyword id="KW-0378">Hydrolase</keyword>
<keyword id="KW-0408">Iron</keyword>
<keyword id="KW-0479">Metal-binding</keyword>
<keyword id="KW-1185">Reference proteome</keyword>
<keyword id="KW-0862">Zinc</keyword>
<protein>
    <recommendedName>
        <fullName evidence="1">Imidazolonepropionase</fullName>
        <ecNumber evidence="1">3.5.2.7</ecNumber>
    </recommendedName>
    <alternativeName>
        <fullName evidence="1">Imidazolone-5-propionate hydrolase</fullName>
    </alternativeName>
</protein>
<comment type="function">
    <text evidence="1">Catalyzes the hydrolytic cleavage of the carbon-nitrogen bond in imidazolone-5-propanoate to yield N-formimidoyl-L-glutamate. It is the third step in the universal histidine degradation pathway.</text>
</comment>
<comment type="catalytic activity">
    <reaction evidence="1">
        <text>4-imidazolone-5-propanoate + H2O = N-formimidoyl-L-glutamate</text>
        <dbReference type="Rhea" id="RHEA:23660"/>
        <dbReference type="ChEBI" id="CHEBI:15377"/>
        <dbReference type="ChEBI" id="CHEBI:58928"/>
        <dbReference type="ChEBI" id="CHEBI:77893"/>
        <dbReference type="EC" id="3.5.2.7"/>
    </reaction>
</comment>
<comment type="cofactor">
    <cofactor evidence="1">
        <name>Zn(2+)</name>
        <dbReference type="ChEBI" id="CHEBI:29105"/>
    </cofactor>
    <cofactor evidence="1">
        <name>Fe(3+)</name>
        <dbReference type="ChEBI" id="CHEBI:29034"/>
    </cofactor>
    <text evidence="1">Binds 1 zinc or iron ion per subunit.</text>
</comment>
<comment type="pathway">
    <text evidence="1">Amino-acid degradation; L-histidine degradation into L-glutamate; N-formimidoyl-L-glutamate from L-histidine: step 3/3.</text>
</comment>
<comment type="subcellular location">
    <subcellularLocation>
        <location evidence="1">Cytoplasm</location>
    </subcellularLocation>
</comment>
<comment type="similarity">
    <text evidence="1">Belongs to the metallo-dependent hydrolases superfamily. HutI family.</text>
</comment>
<feature type="chain" id="PRO_1000079831" description="Imidazolonepropionase">
    <location>
        <begin position="1"/>
        <end position="408"/>
    </location>
</feature>
<feature type="binding site" evidence="1">
    <location>
        <position position="73"/>
    </location>
    <ligand>
        <name>Fe(3+)</name>
        <dbReference type="ChEBI" id="CHEBI:29034"/>
    </ligand>
</feature>
<feature type="binding site" evidence="1">
    <location>
        <position position="73"/>
    </location>
    <ligand>
        <name>Zn(2+)</name>
        <dbReference type="ChEBI" id="CHEBI:29105"/>
    </ligand>
</feature>
<feature type="binding site" evidence="1">
    <location>
        <position position="75"/>
    </location>
    <ligand>
        <name>Fe(3+)</name>
        <dbReference type="ChEBI" id="CHEBI:29034"/>
    </ligand>
</feature>
<feature type="binding site" evidence="1">
    <location>
        <position position="75"/>
    </location>
    <ligand>
        <name>Zn(2+)</name>
        <dbReference type="ChEBI" id="CHEBI:29105"/>
    </ligand>
</feature>
<feature type="binding site" evidence="1">
    <location>
        <position position="82"/>
    </location>
    <ligand>
        <name>4-imidazolone-5-propanoate</name>
        <dbReference type="ChEBI" id="CHEBI:77893"/>
    </ligand>
</feature>
<feature type="binding site" evidence="1">
    <location>
        <position position="145"/>
    </location>
    <ligand>
        <name>4-imidazolone-5-propanoate</name>
        <dbReference type="ChEBI" id="CHEBI:77893"/>
    </ligand>
</feature>
<feature type="binding site" evidence="1">
    <location>
        <position position="145"/>
    </location>
    <ligand>
        <name>N-formimidoyl-L-glutamate</name>
        <dbReference type="ChEBI" id="CHEBI:58928"/>
    </ligand>
</feature>
<feature type="binding site" evidence="1">
    <location>
        <position position="178"/>
    </location>
    <ligand>
        <name>4-imidazolone-5-propanoate</name>
        <dbReference type="ChEBI" id="CHEBI:77893"/>
    </ligand>
</feature>
<feature type="binding site" evidence="1">
    <location>
        <position position="243"/>
    </location>
    <ligand>
        <name>Fe(3+)</name>
        <dbReference type="ChEBI" id="CHEBI:29034"/>
    </ligand>
</feature>
<feature type="binding site" evidence="1">
    <location>
        <position position="243"/>
    </location>
    <ligand>
        <name>Zn(2+)</name>
        <dbReference type="ChEBI" id="CHEBI:29105"/>
    </ligand>
</feature>
<feature type="binding site" evidence="1">
    <location>
        <position position="246"/>
    </location>
    <ligand>
        <name>4-imidazolone-5-propanoate</name>
        <dbReference type="ChEBI" id="CHEBI:77893"/>
    </ligand>
</feature>
<feature type="binding site" evidence="1">
    <location>
        <position position="318"/>
    </location>
    <ligand>
        <name>Fe(3+)</name>
        <dbReference type="ChEBI" id="CHEBI:29034"/>
    </ligand>
</feature>
<feature type="binding site" evidence="1">
    <location>
        <position position="318"/>
    </location>
    <ligand>
        <name>Zn(2+)</name>
        <dbReference type="ChEBI" id="CHEBI:29105"/>
    </ligand>
</feature>
<feature type="binding site" evidence="1">
    <location>
        <position position="320"/>
    </location>
    <ligand>
        <name>N-formimidoyl-L-glutamate</name>
        <dbReference type="ChEBI" id="CHEBI:58928"/>
    </ligand>
</feature>
<feature type="binding site" evidence="1">
    <location>
        <position position="322"/>
    </location>
    <ligand>
        <name>N-formimidoyl-L-glutamate</name>
        <dbReference type="ChEBI" id="CHEBI:58928"/>
    </ligand>
</feature>
<feature type="binding site" evidence="1">
    <location>
        <position position="323"/>
    </location>
    <ligand>
        <name>4-imidazolone-5-propanoate</name>
        <dbReference type="ChEBI" id="CHEBI:77893"/>
    </ligand>
</feature>
<sequence>MSWDQVWIDVNVATMSPSVSAPYGAITDAAVAVEKGRIAWIGLRSELPEFDVLSTPVYRGKGAWITPGLIDAHTHLVFAGNRANEFELRLQGASYEEIARSGGGIISTVKACREASEGELFELGRKRLNALAKEGVTTVEIKSGYGLETETELKLLRVARELGKHHHVDVKTTFLGAHAIPPEYKDNAETYVDLVIDEMLPAVIEENLADAADVFCENIAFSVEQTERVLTAAKDAGLDIKLHAEQLSNLGGSAMAARLGAKSVDHIEYLDETGVKALSQSGTCATLLPGAFYFLRETQMPPIELLRKHKVPMVLASDYNPGSSPLCSSLLMLNMGCTLFRLTPEEALAGMTRNAAKALGVEDNVGVLEVGMQADFCLWDITTPAQLSYSYGVGVCLEVVKSGQLVHQ</sequence>
<evidence type="ECO:0000255" key="1">
    <source>
        <dbReference type="HAMAP-Rule" id="MF_00372"/>
    </source>
</evidence>
<name>HUTI_SHESH</name>
<reference key="1">
    <citation type="submission" date="2007-08" db="EMBL/GenBank/DDBJ databases">
        <title>Complete sequence of Shewanella sediminis HAW-EB3.</title>
        <authorList>
            <consortium name="US DOE Joint Genome Institute"/>
            <person name="Copeland A."/>
            <person name="Lucas S."/>
            <person name="Lapidus A."/>
            <person name="Barry K."/>
            <person name="Glavina del Rio T."/>
            <person name="Dalin E."/>
            <person name="Tice H."/>
            <person name="Pitluck S."/>
            <person name="Chertkov O."/>
            <person name="Brettin T."/>
            <person name="Bruce D."/>
            <person name="Detter J.C."/>
            <person name="Han C."/>
            <person name="Schmutz J."/>
            <person name="Larimer F."/>
            <person name="Land M."/>
            <person name="Hauser L."/>
            <person name="Kyrpides N."/>
            <person name="Kim E."/>
            <person name="Zhao J.-S."/>
            <person name="Richardson P."/>
        </authorList>
    </citation>
    <scope>NUCLEOTIDE SEQUENCE [LARGE SCALE GENOMIC DNA]</scope>
    <source>
        <strain>HAW-EB3</strain>
    </source>
</reference>